<evidence type="ECO:0000255" key="1">
    <source>
        <dbReference type="HAMAP-Rule" id="MF_01188"/>
    </source>
</evidence>
<evidence type="ECO:0000256" key="2">
    <source>
        <dbReference type="SAM" id="MobiDB-lite"/>
    </source>
</evidence>
<feature type="chain" id="PRO_1000085468" description="UPF0441 protein YgiB">
    <location>
        <begin position="1"/>
        <end position="223"/>
    </location>
</feature>
<feature type="region of interest" description="Disordered" evidence="2">
    <location>
        <begin position="201"/>
        <end position="223"/>
    </location>
</feature>
<feature type="compositionally biased region" description="Polar residues" evidence="2">
    <location>
        <begin position="204"/>
        <end position="223"/>
    </location>
</feature>
<name>YGIB_SALAR</name>
<keyword id="KW-1185">Reference proteome</keyword>
<organism>
    <name type="scientific">Salmonella arizonae (strain ATCC BAA-731 / CDC346-86 / RSK2980)</name>
    <dbReference type="NCBI Taxonomy" id="41514"/>
    <lineage>
        <taxon>Bacteria</taxon>
        <taxon>Pseudomonadati</taxon>
        <taxon>Pseudomonadota</taxon>
        <taxon>Gammaproteobacteria</taxon>
        <taxon>Enterobacterales</taxon>
        <taxon>Enterobacteriaceae</taxon>
        <taxon>Salmonella</taxon>
    </lineage>
</organism>
<sequence length="223" mass="23357">MKRTKSIHHASFRKSWSARHLTPVALAVTAVFMLAGCEKSDETVSLYQNADDCSAANPGKSAECTTAYNNALKEAERTAPKYATREDCVAEFGEGQCQQAPAQAGMAPENQAQAQQSSGSFWMPLMAGYMMGRLMGGGAGFAQQPLFSSKNPASPAYGKYTDAAGKNYGAAQPGRTMTVPKTAMAPKPATTTTVTRGGFGESVAKQSAMQRSAAGTSTRSMGG</sequence>
<accession>A9MPX4</accession>
<reference key="1">
    <citation type="submission" date="2007-11" db="EMBL/GenBank/DDBJ databases">
        <authorList>
            <consortium name="The Salmonella enterica serovar Arizonae Genome Sequencing Project"/>
            <person name="McClelland M."/>
            <person name="Sanderson E.K."/>
            <person name="Porwollik S."/>
            <person name="Spieth J."/>
            <person name="Clifton W.S."/>
            <person name="Fulton R."/>
            <person name="Chunyan W."/>
            <person name="Wollam A."/>
            <person name="Shah N."/>
            <person name="Pepin K."/>
            <person name="Bhonagiri V."/>
            <person name="Nash W."/>
            <person name="Johnson M."/>
            <person name="Thiruvilangam P."/>
            <person name="Wilson R."/>
        </authorList>
    </citation>
    <scope>NUCLEOTIDE SEQUENCE [LARGE SCALE GENOMIC DNA]</scope>
    <source>
        <strain>ATCC BAA-731 / CDC346-86 / RSK2980</strain>
    </source>
</reference>
<comment type="similarity">
    <text evidence="1">Belongs to the UPF0441 family.</text>
</comment>
<proteinExistence type="inferred from homology"/>
<protein>
    <recommendedName>
        <fullName evidence="1">UPF0441 protein YgiB</fullName>
    </recommendedName>
</protein>
<gene>
    <name evidence="1" type="primary">ygiB</name>
    <name type="ordered locus">SARI_04442</name>
</gene>
<dbReference type="EMBL" id="CP000880">
    <property type="protein sequence ID" value="ABX24217.1"/>
    <property type="molecule type" value="Genomic_DNA"/>
</dbReference>
<dbReference type="STRING" id="41514.SARI_04442"/>
<dbReference type="KEGG" id="ses:SARI_04442"/>
<dbReference type="HOGENOM" id="CLU_095624_0_0_6"/>
<dbReference type="Proteomes" id="UP000002084">
    <property type="component" value="Chromosome"/>
</dbReference>
<dbReference type="HAMAP" id="MF_01188">
    <property type="entry name" value="UPF0441"/>
    <property type="match status" value="1"/>
</dbReference>
<dbReference type="InterPro" id="IPR009576">
    <property type="entry name" value="Biofilm_formation_YgiB"/>
</dbReference>
<dbReference type="NCBIfam" id="NF008655">
    <property type="entry name" value="PRK11653.1"/>
    <property type="match status" value="1"/>
</dbReference>
<dbReference type="Pfam" id="PF06693">
    <property type="entry name" value="DUF1190"/>
    <property type="match status" value="1"/>
</dbReference>